<protein>
    <recommendedName>
        <fullName evidence="1">tRNA(Ile)-lysidine synthase</fullName>
        <ecNumber evidence="1">6.3.4.19</ecNumber>
    </recommendedName>
    <alternativeName>
        <fullName evidence="1">tRNA(Ile)-2-lysyl-cytidine synthase</fullName>
    </alternativeName>
    <alternativeName>
        <fullName evidence="1">tRNA(Ile)-lysidine synthetase</fullName>
    </alternativeName>
</protein>
<evidence type="ECO:0000255" key="1">
    <source>
        <dbReference type="HAMAP-Rule" id="MF_01161"/>
    </source>
</evidence>
<gene>
    <name evidence="1" type="primary">tilS</name>
    <name type="ordered locus">A1G_00420</name>
</gene>
<keyword id="KW-0067">ATP-binding</keyword>
<keyword id="KW-0963">Cytoplasm</keyword>
<keyword id="KW-0436">Ligase</keyword>
<keyword id="KW-0547">Nucleotide-binding</keyword>
<keyword id="KW-0819">tRNA processing</keyword>
<organism>
    <name type="scientific">Rickettsia rickettsii (strain Sheila Smith)</name>
    <dbReference type="NCBI Taxonomy" id="392021"/>
    <lineage>
        <taxon>Bacteria</taxon>
        <taxon>Pseudomonadati</taxon>
        <taxon>Pseudomonadota</taxon>
        <taxon>Alphaproteobacteria</taxon>
        <taxon>Rickettsiales</taxon>
        <taxon>Rickettsiaceae</taxon>
        <taxon>Rickettsieae</taxon>
        <taxon>Rickettsia</taxon>
        <taxon>spotted fever group</taxon>
    </lineage>
</organism>
<name>TILS_RICRS</name>
<sequence length="478" mass="55503">MLYEKFEYNINNLIGNFSLSKISIAVSGGSDSVALLYLANIWAEKNNIELFVISVDHNLREQSKQETHYIQNISNSLNRKHYSLSFDHQNNFSNLQERAREGRYDLMTNLCLELDILVLLTAHHEDDYVENFCLRLERNSGIFGLSSSNINWYNNIHIIRPLYNIPKSELVEYLVSHNIKWFEDESNSSDKYRRNVIRQKLAKGADYIRHFSKPVYREEFKGDTERSTAAYTSVREDASTGTASKLSLEAKCGKMSKAAIISQQLKTNKRIENEFKPELISAIAEAVKIFEYGFAFLDLVKFDKFSNEVKVQIINFLLIIISGQSRAARFYSVEPILKLITQDVNFKNTLHGCIIKRIQNELLIYREFGKKLPESKILLDKSVIWDNRFCITKNQEAPNCFVTHLSLKDYKIIKKQLDLEPLKNLSCKNHNAVLLTLPIIKILEKVIAIPHISYYDNDMWNFEVSFSPNFVSRFTHFC</sequence>
<proteinExistence type="inferred from homology"/>
<reference key="1">
    <citation type="submission" date="2007-09" db="EMBL/GenBank/DDBJ databases">
        <title>Complete genome sequence of Rickettsia rickettsii.</title>
        <authorList>
            <person name="Madan A."/>
            <person name="Fahey J."/>
            <person name="Helton E."/>
            <person name="Ketteman M."/>
            <person name="Madan A."/>
            <person name="Rodrigues S."/>
            <person name="Sanchez A."/>
            <person name="Dasch G."/>
            <person name="Eremeeva M."/>
        </authorList>
    </citation>
    <scope>NUCLEOTIDE SEQUENCE [LARGE SCALE GENOMIC DNA]</scope>
    <source>
        <strain>Sheila Smith</strain>
    </source>
</reference>
<comment type="function">
    <text evidence="1">Ligates lysine onto the cytidine present at position 34 of the AUA codon-specific tRNA(Ile) that contains the anticodon CAU, in an ATP-dependent manner. Cytidine is converted to lysidine, thus changing the amino acid specificity of the tRNA from methionine to isoleucine.</text>
</comment>
<comment type="catalytic activity">
    <reaction evidence="1">
        <text>cytidine(34) in tRNA(Ile2) + L-lysine + ATP = lysidine(34) in tRNA(Ile2) + AMP + diphosphate + H(+)</text>
        <dbReference type="Rhea" id="RHEA:43744"/>
        <dbReference type="Rhea" id="RHEA-COMP:10625"/>
        <dbReference type="Rhea" id="RHEA-COMP:10670"/>
        <dbReference type="ChEBI" id="CHEBI:15378"/>
        <dbReference type="ChEBI" id="CHEBI:30616"/>
        <dbReference type="ChEBI" id="CHEBI:32551"/>
        <dbReference type="ChEBI" id="CHEBI:33019"/>
        <dbReference type="ChEBI" id="CHEBI:82748"/>
        <dbReference type="ChEBI" id="CHEBI:83665"/>
        <dbReference type="ChEBI" id="CHEBI:456215"/>
        <dbReference type="EC" id="6.3.4.19"/>
    </reaction>
</comment>
<comment type="subcellular location">
    <subcellularLocation>
        <location evidence="1">Cytoplasm</location>
    </subcellularLocation>
</comment>
<comment type="domain">
    <text>The N-terminal region contains the highly conserved SGGXDS motif, predicted to be a P-loop motif involved in ATP binding.</text>
</comment>
<comment type="similarity">
    <text evidence="1">Belongs to the tRNA(Ile)-lysidine synthase family.</text>
</comment>
<dbReference type="EC" id="6.3.4.19" evidence="1"/>
<dbReference type="EMBL" id="CP000848">
    <property type="protein sequence ID" value="ABV75672.1"/>
    <property type="molecule type" value="Genomic_DNA"/>
</dbReference>
<dbReference type="RefSeq" id="WP_012150294.1">
    <property type="nucleotide sequence ID" value="NZ_CP121767.1"/>
</dbReference>
<dbReference type="SMR" id="A8GQJ7"/>
<dbReference type="GeneID" id="79936869"/>
<dbReference type="KEGG" id="rri:A1G_00420"/>
<dbReference type="HOGENOM" id="CLU_018869_3_2_5"/>
<dbReference type="Proteomes" id="UP000006832">
    <property type="component" value="Chromosome"/>
</dbReference>
<dbReference type="GO" id="GO:0005737">
    <property type="term" value="C:cytoplasm"/>
    <property type="evidence" value="ECO:0007669"/>
    <property type="project" value="UniProtKB-SubCell"/>
</dbReference>
<dbReference type="GO" id="GO:0005524">
    <property type="term" value="F:ATP binding"/>
    <property type="evidence" value="ECO:0007669"/>
    <property type="project" value="UniProtKB-UniRule"/>
</dbReference>
<dbReference type="GO" id="GO:0032267">
    <property type="term" value="F:tRNA(Ile)-lysidine synthase activity"/>
    <property type="evidence" value="ECO:0007669"/>
    <property type="project" value="UniProtKB-EC"/>
</dbReference>
<dbReference type="GO" id="GO:0006400">
    <property type="term" value="P:tRNA modification"/>
    <property type="evidence" value="ECO:0007669"/>
    <property type="project" value="UniProtKB-UniRule"/>
</dbReference>
<dbReference type="CDD" id="cd01992">
    <property type="entry name" value="TilS_N"/>
    <property type="match status" value="1"/>
</dbReference>
<dbReference type="Gene3D" id="3.40.50.620">
    <property type="entry name" value="HUPs"/>
    <property type="match status" value="1"/>
</dbReference>
<dbReference type="HAMAP" id="MF_01161">
    <property type="entry name" value="tRNA_Ile_lys_synt"/>
    <property type="match status" value="1"/>
</dbReference>
<dbReference type="InterPro" id="IPR014729">
    <property type="entry name" value="Rossmann-like_a/b/a_fold"/>
</dbReference>
<dbReference type="InterPro" id="IPR005728">
    <property type="entry name" value="RPE1"/>
</dbReference>
<dbReference type="InterPro" id="IPR011063">
    <property type="entry name" value="TilS/TtcA_N"/>
</dbReference>
<dbReference type="InterPro" id="IPR012094">
    <property type="entry name" value="tRNA_Ile_lys_synt"/>
</dbReference>
<dbReference type="InterPro" id="IPR012795">
    <property type="entry name" value="tRNA_Ile_lys_synt_N"/>
</dbReference>
<dbReference type="NCBIfam" id="TIGR02432">
    <property type="entry name" value="lysidine_TilS_N"/>
    <property type="match status" value="1"/>
</dbReference>
<dbReference type="NCBIfam" id="TIGR01045">
    <property type="entry name" value="RPE1"/>
    <property type="match status" value="1"/>
</dbReference>
<dbReference type="PANTHER" id="PTHR43033">
    <property type="entry name" value="TRNA(ILE)-LYSIDINE SYNTHASE-RELATED"/>
    <property type="match status" value="1"/>
</dbReference>
<dbReference type="PANTHER" id="PTHR43033:SF1">
    <property type="entry name" value="TRNA(ILE)-LYSIDINE SYNTHASE-RELATED"/>
    <property type="match status" value="1"/>
</dbReference>
<dbReference type="Pfam" id="PF01171">
    <property type="entry name" value="ATP_bind_3"/>
    <property type="match status" value="1"/>
</dbReference>
<dbReference type="SUPFAM" id="SSF52402">
    <property type="entry name" value="Adenine nucleotide alpha hydrolases-like"/>
    <property type="match status" value="1"/>
</dbReference>
<accession>A8GQJ7</accession>
<feature type="chain" id="PRO_1000065626" description="tRNA(Ile)-lysidine synthase">
    <location>
        <begin position="1"/>
        <end position="478"/>
    </location>
</feature>
<feature type="binding site" evidence="1">
    <location>
        <begin position="27"/>
        <end position="32"/>
    </location>
    <ligand>
        <name>ATP</name>
        <dbReference type="ChEBI" id="CHEBI:30616"/>
    </ligand>
</feature>